<evidence type="ECO:0000255" key="1">
    <source>
        <dbReference type="PROSITE-ProRule" id="PRU00274"/>
    </source>
</evidence>
<evidence type="ECO:0000255" key="2">
    <source>
        <dbReference type="PROSITE-ProRule" id="PRU10078"/>
    </source>
</evidence>
<evidence type="ECO:0000255" key="3">
    <source>
        <dbReference type="PROSITE-ProRule" id="PRU10079"/>
    </source>
</evidence>
<evidence type="ECO:0000269" key="4">
    <source>
    </source>
</evidence>
<evidence type="ECO:0000269" key="5">
    <source>
    </source>
</evidence>
<evidence type="ECO:0000305" key="6"/>
<evidence type="ECO:0000312" key="7">
    <source>
        <dbReference type="PDB" id="1EQ9"/>
    </source>
</evidence>
<evidence type="ECO:0007829" key="8">
    <source>
        <dbReference type="PDB" id="1EQ9"/>
    </source>
</evidence>
<proteinExistence type="evidence at protein level"/>
<organism>
    <name type="scientific">Solenopsis invicta</name>
    <name type="common">Red imported fire ant</name>
    <name type="synonym">Solenopsis wagneri</name>
    <dbReference type="NCBI Taxonomy" id="13686"/>
    <lineage>
        <taxon>Eukaryota</taxon>
        <taxon>Metazoa</taxon>
        <taxon>Ecdysozoa</taxon>
        <taxon>Arthropoda</taxon>
        <taxon>Hexapoda</taxon>
        <taxon>Insecta</taxon>
        <taxon>Pterygota</taxon>
        <taxon>Neoptera</taxon>
        <taxon>Endopterygota</taxon>
        <taxon>Hymenoptera</taxon>
        <taxon>Apocrita</taxon>
        <taxon>Aculeata</taxon>
        <taxon>Formicoidea</taxon>
        <taxon>Formicidae</taxon>
        <taxon>Myrmicinae</taxon>
        <taxon>Solenopsis</taxon>
    </lineage>
</organism>
<keyword id="KW-0002">3D-structure</keyword>
<keyword id="KW-0903">Direct protein sequencing</keyword>
<keyword id="KW-1015">Disulfide bond</keyword>
<keyword id="KW-0378">Hydrolase</keyword>
<keyword id="KW-0645">Protease</keyword>
<keyword id="KW-0964">Secreted</keyword>
<keyword id="KW-0720">Serine protease</keyword>
<comment type="catalytic activity">
    <reaction evidence="2 3 5">
        <text>Preferential cleavage: Tyr-|-Xaa, Trp-|-Xaa, Phe-|-Xaa, Leu-|-Xaa.</text>
        <dbReference type="EC" id="3.4.21.1"/>
    </reaction>
</comment>
<comment type="subcellular location">
    <subcellularLocation>
        <location>Secreted</location>
        <location>Extracellular space</location>
    </subcellularLocation>
</comment>
<comment type="developmental stage">
    <text evidence="5">Expressed in fourth instar larvae.</text>
</comment>
<comment type="similarity">
    <text evidence="1">Belongs to the peptidase S1 family.</text>
</comment>
<dbReference type="EC" id="3.4.21.1"/>
<dbReference type="PDB" id="1EQ9">
    <property type="method" value="X-ray"/>
    <property type="resolution" value="1.70 A"/>
    <property type="chains" value="A/B=1-222"/>
</dbReference>
<dbReference type="PDBsum" id="1EQ9"/>
<dbReference type="SMR" id="Q7SIG2"/>
<dbReference type="BRENDA" id="3.4.21.1">
    <property type="organism ID" value="6959"/>
</dbReference>
<dbReference type="EvolutionaryTrace" id="Q7SIG2"/>
<dbReference type="GO" id="GO:0005576">
    <property type="term" value="C:extracellular region"/>
    <property type="evidence" value="ECO:0007669"/>
    <property type="project" value="UniProtKB-SubCell"/>
</dbReference>
<dbReference type="GO" id="GO:0004252">
    <property type="term" value="F:serine-type endopeptidase activity"/>
    <property type="evidence" value="ECO:0007669"/>
    <property type="project" value="UniProtKB-EC"/>
</dbReference>
<dbReference type="GO" id="GO:0006508">
    <property type="term" value="P:proteolysis"/>
    <property type="evidence" value="ECO:0007669"/>
    <property type="project" value="UniProtKB-KW"/>
</dbReference>
<dbReference type="CDD" id="cd00190">
    <property type="entry name" value="Tryp_SPc"/>
    <property type="match status" value="1"/>
</dbReference>
<dbReference type="FunFam" id="2.40.10.10:FF:000047">
    <property type="entry name" value="Trypsin eta"/>
    <property type="match status" value="1"/>
</dbReference>
<dbReference type="Gene3D" id="2.40.10.10">
    <property type="entry name" value="Trypsin-like serine proteases"/>
    <property type="match status" value="2"/>
</dbReference>
<dbReference type="InterPro" id="IPR009003">
    <property type="entry name" value="Peptidase_S1_PA"/>
</dbReference>
<dbReference type="InterPro" id="IPR043504">
    <property type="entry name" value="Peptidase_S1_PA_chymotrypsin"/>
</dbReference>
<dbReference type="InterPro" id="IPR001314">
    <property type="entry name" value="Peptidase_S1A"/>
</dbReference>
<dbReference type="InterPro" id="IPR001254">
    <property type="entry name" value="Trypsin_dom"/>
</dbReference>
<dbReference type="InterPro" id="IPR018114">
    <property type="entry name" value="TRYPSIN_HIS"/>
</dbReference>
<dbReference type="InterPro" id="IPR033116">
    <property type="entry name" value="TRYPSIN_SER"/>
</dbReference>
<dbReference type="PANTHER" id="PTHR24252">
    <property type="entry name" value="ACROSIN-RELATED"/>
    <property type="match status" value="1"/>
</dbReference>
<dbReference type="PANTHER" id="PTHR24252:SF7">
    <property type="entry name" value="HYALIN"/>
    <property type="match status" value="1"/>
</dbReference>
<dbReference type="Pfam" id="PF00089">
    <property type="entry name" value="Trypsin"/>
    <property type="match status" value="1"/>
</dbReference>
<dbReference type="PRINTS" id="PR00722">
    <property type="entry name" value="CHYMOTRYPSIN"/>
</dbReference>
<dbReference type="SMART" id="SM00020">
    <property type="entry name" value="Tryp_SPc"/>
    <property type="match status" value="1"/>
</dbReference>
<dbReference type="SUPFAM" id="SSF50494">
    <property type="entry name" value="Trypsin-like serine proteases"/>
    <property type="match status" value="1"/>
</dbReference>
<dbReference type="PROSITE" id="PS50240">
    <property type="entry name" value="TRYPSIN_DOM"/>
    <property type="match status" value="1"/>
</dbReference>
<dbReference type="PROSITE" id="PS00134">
    <property type="entry name" value="TRYPSIN_HIS"/>
    <property type="match status" value="1"/>
</dbReference>
<dbReference type="PROSITE" id="PS00135">
    <property type="entry name" value="TRYPSIN_SER"/>
    <property type="match status" value="1"/>
</dbReference>
<feature type="chain" id="PRO_0000248259" description="Chymotrypsin-1">
    <location>
        <begin position="1"/>
        <end position="222"/>
    </location>
</feature>
<feature type="domain" description="Peptidase S1" evidence="1">
    <location>
        <begin position="1"/>
        <end position="221"/>
    </location>
</feature>
<feature type="active site" description="Charge relay system" evidence="4">
    <location>
        <position position="41"/>
    </location>
</feature>
<feature type="active site" description="Charge relay system" evidence="4">
    <location>
        <position position="87"/>
    </location>
</feature>
<feature type="active site" description="Charge relay system" evidence="4">
    <location>
        <position position="178"/>
    </location>
</feature>
<feature type="disulfide bond" evidence="1 4">
    <location>
        <begin position="26"/>
        <end position="42"/>
    </location>
</feature>
<feature type="disulfide bond" evidence="1 4">
    <location>
        <begin position="151"/>
        <end position="164"/>
    </location>
</feature>
<feature type="disulfide bond" evidence="1 4">
    <location>
        <begin position="174"/>
        <end position="198"/>
    </location>
</feature>
<feature type="strand" evidence="8">
    <location>
        <begin position="15"/>
        <end position="20"/>
    </location>
</feature>
<feature type="strand" evidence="8">
    <location>
        <begin position="23"/>
        <end position="30"/>
    </location>
</feature>
<feature type="strand" evidence="8">
    <location>
        <begin position="32"/>
        <end position="38"/>
    </location>
</feature>
<feature type="helix" evidence="8">
    <location>
        <begin position="40"/>
        <end position="43"/>
    </location>
</feature>
<feature type="helix" evidence="8">
    <location>
        <begin position="49"/>
        <end position="51"/>
    </location>
</feature>
<feature type="strand" evidence="8">
    <location>
        <begin position="52"/>
        <end position="57"/>
    </location>
</feature>
<feature type="strand" evidence="8">
    <location>
        <begin position="66"/>
        <end position="75"/>
    </location>
</feature>
<feature type="turn" evidence="8">
    <location>
        <begin position="81"/>
        <end position="84"/>
    </location>
</feature>
<feature type="strand" evidence="8">
    <location>
        <begin position="89"/>
        <end position="95"/>
    </location>
</feature>
<feature type="strand" evidence="8">
    <location>
        <begin position="118"/>
        <end position="124"/>
    </location>
</feature>
<feature type="strand" evidence="8">
    <location>
        <begin position="139"/>
        <end position="146"/>
    </location>
</feature>
<feature type="helix" evidence="8">
    <location>
        <begin position="148"/>
        <end position="154"/>
    </location>
</feature>
<feature type="strand" evidence="8">
    <location>
        <begin position="155"/>
        <end position="157"/>
    </location>
</feature>
<feature type="strand" evidence="8">
    <location>
        <begin position="162"/>
        <end position="165"/>
    </location>
</feature>
<feature type="strand" evidence="8">
    <location>
        <begin position="181"/>
        <end position="184"/>
    </location>
</feature>
<feature type="strand" evidence="8">
    <location>
        <begin position="187"/>
        <end position="194"/>
    </location>
</feature>
<feature type="turn" evidence="8">
    <location>
        <begin position="197"/>
        <end position="199"/>
    </location>
</feature>
<feature type="strand" evidence="8">
    <location>
        <begin position="200"/>
        <end position="202"/>
    </location>
</feature>
<feature type="strand" evidence="8">
    <location>
        <begin position="204"/>
        <end position="208"/>
    </location>
</feature>
<feature type="helix" evidence="8">
    <location>
        <begin position="209"/>
        <end position="212"/>
    </location>
</feature>
<feature type="helix" evidence="8">
    <location>
        <begin position="213"/>
        <end position="218"/>
    </location>
</feature>
<protein>
    <recommendedName>
        <fullName>Chymotrypsin-1</fullName>
        <ecNumber>3.4.21.1</ecNumber>
    </recommendedName>
    <alternativeName>
        <fullName>Chymotrypsin I</fullName>
    </alternativeName>
    <alternativeName>
        <fullName>Soli C1</fullName>
    </alternativeName>
</protein>
<accession>Q7SIG2</accession>
<reference evidence="6" key="1">
    <citation type="journal article" date="1998" name="J. Biol. Chem.">
        <title>Proteolytic enzymes from larvae of the fire ant, Solenopsis invicta. Isolation and characterization of four serine endopeptidases.</title>
        <authorList>
            <person name="Whitworth S.T."/>
            <person name="Blum M.S."/>
            <person name="Travis J."/>
        </authorList>
    </citation>
    <scope>PROTEIN SEQUENCE OF 1-22</scope>
    <scope>CATALYTIC ACTIVITY</scope>
    <scope>DEVELOPMENTAL STAGE</scope>
    <source>
        <tissue evidence="5">Larva</tissue>
    </source>
</reference>
<reference evidence="6 7" key="2">
    <citation type="journal article" date="2000" name="J. Mol. Biol.">
        <title>The structure of an insect chymotrypsin.</title>
        <authorList>
            <person name="Botos I."/>
            <person name="Meyer E."/>
            <person name="Nguyen M."/>
            <person name="Swanson S.M."/>
            <person name="Koomen J.M."/>
            <person name="Russell D.H."/>
            <person name="Meyer E.F."/>
        </authorList>
    </citation>
    <scope>X-RAY CRYSTALLOGRAPHY (1.7 ANGSTROMS) IN COMPLEX WITH INHIBITOR</scope>
    <scope>DISULFIDE BONDS</scope>
    <source>
        <tissue evidence="4">Larva</tissue>
    </source>
</reference>
<sequence>IVGGKDAPVGKYPYQVSLRLSGSHRCGASILDNNNVLTAAHCVDGLSNLNRLKVHVGTNYLSESGDVYDVEDAVVNKNYDDFLLRNDVALVHLTNPIKFNDLVQPIKLSTNDEDLESNPCTLTGWGSTRLGGNTPNALQEIELIVHPQKQCERDQWRVIDSHICTLTKRGEGACHGDSGGPLVANGAQIGIVSFGSPCALGEPDVYTRVSSFVSWINANLKK</sequence>
<name>CTR1_SOLIN</name>